<protein>
    <recommendedName>
        <fullName>Bowman-Birk type trypsin inhibitor TI1</fullName>
    </recommendedName>
</protein>
<accession>P07679</accession>
<dbReference type="PIR" id="S00349">
    <property type="entry name" value="TIOAB"/>
</dbReference>
<dbReference type="SMR" id="P07679"/>
<dbReference type="MEROPS" id="I12.009"/>
<dbReference type="GO" id="GO:0005576">
    <property type="term" value="C:extracellular region"/>
    <property type="evidence" value="ECO:0007669"/>
    <property type="project" value="InterPro"/>
</dbReference>
<dbReference type="GO" id="GO:0004867">
    <property type="term" value="F:serine-type endopeptidase inhibitor activity"/>
    <property type="evidence" value="ECO:0007669"/>
    <property type="project" value="UniProtKB-KW"/>
</dbReference>
<dbReference type="CDD" id="cd00023">
    <property type="entry name" value="BBI"/>
    <property type="match status" value="1"/>
</dbReference>
<dbReference type="Gene3D" id="2.10.69.10">
    <property type="entry name" value="Cysteine Protease (Bromelain) Inhibitor, subunit H"/>
    <property type="match status" value="1"/>
</dbReference>
<dbReference type="InterPro" id="IPR035995">
    <property type="entry name" value="Bowman-Birk_prot_inh"/>
</dbReference>
<dbReference type="InterPro" id="IPR000877">
    <property type="entry name" value="Prot_inh_BBI"/>
</dbReference>
<dbReference type="PANTHER" id="PTHR33479">
    <property type="entry name" value="BOWMAN-BIRK TYPE BRAN TRYPSIN INHIBITOR"/>
    <property type="match status" value="1"/>
</dbReference>
<dbReference type="PANTHER" id="PTHR33479:SF22">
    <property type="entry name" value="BOWMAN-BIRK TYPE BRAN TRYPSIN INHIBITOR"/>
    <property type="match status" value="1"/>
</dbReference>
<dbReference type="Pfam" id="PF00228">
    <property type="entry name" value="Bowman-Birk_leg"/>
    <property type="match status" value="1"/>
</dbReference>
<dbReference type="SMART" id="SM00269">
    <property type="entry name" value="BowB"/>
    <property type="match status" value="1"/>
</dbReference>
<dbReference type="SUPFAM" id="SSF57247">
    <property type="entry name" value="Bowman-Birk inhibitor, BBI"/>
    <property type="match status" value="1"/>
</dbReference>
<dbReference type="PROSITE" id="PS00281">
    <property type="entry name" value="BOWMAN_BIRK"/>
    <property type="match status" value="1"/>
</dbReference>
<sequence length="64" mass="7270">GDEKRPWECCDIAMCTRSIPPICRCVDKVDRCSDACKDCEETEDNRHVCFDTYIGDPGPTCHDD</sequence>
<feature type="chain" id="PRO_0000105836" description="Bowman-Birk type trypsin inhibitor TI1">
    <location>
        <begin position="1"/>
        <end position="64"/>
    </location>
</feature>
<feature type="site" description="Reactive bond for trypsin" evidence="1">
    <location>
        <begin position="17"/>
        <end position="18"/>
    </location>
</feature>
<feature type="disulfide bond" evidence="2">
    <location>
        <begin position="9"/>
        <end position="61"/>
    </location>
</feature>
<feature type="disulfide bond" evidence="2">
    <location>
        <begin position="10"/>
        <end position="25"/>
    </location>
</feature>
<feature type="disulfide bond" evidence="2">
    <location>
        <begin position="15"/>
        <end position="23"/>
    </location>
</feature>
<feature type="disulfide bond" evidence="2">
    <location>
        <begin position="32"/>
        <end position="39"/>
    </location>
</feature>
<feature type="disulfide bond" evidence="2">
    <location>
        <begin position="36"/>
        <end position="49"/>
    </location>
</feature>
<reference key="1">
    <citation type="journal article" date="1988" name="FEBS Lett.">
        <title>The amino acid sequence of a cereal Bowman-Birk type trypsin inhibitor from seeds of Jobs' tears (Coix lachryma-jobi L.).</title>
        <authorList>
            <person name="Ary M.B."/>
            <person name="Shewry P.R."/>
            <person name="Richardson M."/>
        </authorList>
    </citation>
    <scope>PROTEIN SEQUENCE</scope>
</reference>
<proteinExistence type="evidence at protein level"/>
<organism>
    <name type="scientific">Coix lacryma-jobi</name>
    <name type="common">Job's tears</name>
    <dbReference type="NCBI Taxonomy" id="4505"/>
    <lineage>
        <taxon>Eukaryota</taxon>
        <taxon>Viridiplantae</taxon>
        <taxon>Streptophyta</taxon>
        <taxon>Embryophyta</taxon>
        <taxon>Tracheophyta</taxon>
        <taxon>Spermatophyta</taxon>
        <taxon>Magnoliopsida</taxon>
        <taxon>Liliopsida</taxon>
        <taxon>Poales</taxon>
        <taxon>Poaceae</taxon>
        <taxon>PACMAD clade</taxon>
        <taxon>Panicoideae</taxon>
        <taxon>Andropogonodae</taxon>
        <taxon>Andropogoneae</taxon>
        <taxon>Rottboelliinae</taxon>
        <taxon>Coix</taxon>
    </lineage>
</organism>
<name>IBB1_COILA</name>
<keyword id="KW-0903">Direct protein sequencing</keyword>
<keyword id="KW-1015">Disulfide bond</keyword>
<keyword id="KW-0646">Protease inhibitor</keyword>
<keyword id="KW-0722">Serine protease inhibitor</keyword>
<comment type="similarity">
    <text evidence="3">Belongs to the Bowman-Birk serine protease inhibitor family.</text>
</comment>
<evidence type="ECO:0000250" key="1"/>
<evidence type="ECO:0000250" key="2">
    <source>
        <dbReference type="UniProtKB" id="P80321"/>
    </source>
</evidence>
<evidence type="ECO:0000305" key="3"/>